<protein>
    <recommendedName>
        <fullName>Putative violet-sensitive opsin</fullName>
    </recommendedName>
    <alternativeName>
        <fullName>KFH-V</fullName>
    </alternativeName>
    <alternativeName>
        <fullName>Violet cone photoreceptor pigment</fullName>
    </alternativeName>
</protein>
<proteinExistence type="evidence at protein level"/>
<reference key="1">
    <citation type="submission" date="1997-03" db="EMBL/GenBank/DDBJ databases">
        <authorList>
            <person name="Hisatomi O."/>
            <person name="Satoh T."/>
            <person name="Tokunaga F."/>
        </authorList>
    </citation>
    <scope>NUCLEOTIDE SEQUENCE [MRNA]</scope>
    <source>
        <tissue>Retina</tissue>
    </source>
</reference>
<accession>P87368</accession>
<comment type="function">
    <text>Visual pigments are the light-absorbing molecules that mediate vision. They consist of an apoprotein, opsin, covalently linked to cis-retinal.</text>
</comment>
<comment type="subcellular location">
    <subcellularLocation>
        <location>Membrane</location>
        <topology>Multi-pass membrane protein</topology>
    </subcellularLocation>
</comment>
<comment type="tissue specificity">
    <text>The three color pigments are found in the cone photoreceptor cells.</text>
</comment>
<comment type="PTM">
    <text evidence="1">Phosphorylated on some or all of the serine and threonine residues present in the C-terminal region.</text>
</comment>
<comment type="similarity">
    <text evidence="3">Belongs to the G-protein coupled receptor 1 family. Opsin subfamily.</text>
</comment>
<feature type="chain" id="PRO_0000197771" description="Putative violet-sensitive opsin">
    <location>
        <begin position="1"/>
        <end position="334"/>
    </location>
</feature>
<feature type="topological domain" description="Extracellular" evidence="2">
    <location>
        <begin position="1"/>
        <end position="29"/>
    </location>
</feature>
<feature type="transmembrane region" description="Helical; Name=1" evidence="2">
    <location>
        <begin position="30"/>
        <end position="54"/>
    </location>
</feature>
<feature type="topological domain" description="Cytoplasmic" evidence="2">
    <location>
        <begin position="55"/>
        <end position="66"/>
    </location>
</feature>
<feature type="transmembrane region" description="Helical; Name=2" evidence="2">
    <location>
        <begin position="67"/>
        <end position="88"/>
    </location>
</feature>
<feature type="topological domain" description="Extracellular" evidence="2">
    <location>
        <begin position="89"/>
        <end position="106"/>
    </location>
</feature>
<feature type="transmembrane region" description="Helical; Name=3" evidence="2">
    <location>
        <begin position="107"/>
        <end position="126"/>
    </location>
</feature>
<feature type="topological domain" description="Cytoplasmic" evidence="2">
    <location>
        <begin position="127"/>
        <end position="145"/>
    </location>
</feature>
<feature type="transmembrane region" description="Helical; Name=4" evidence="2">
    <location>
        <begin position="146"/>
        <end position="168"/>
    </location>
</feature>
<feature type="topological domain" description="Extracellular" evidence="2">
    <location>
        <begin position="169"/>
        <end position="194"/>
    </location>
</feature>
<feature type="transmembrane region" description="Helical; Name=5" evidence="2">
    <location>
        <begin position="195"/>
        <end position="222"/>
    </location>
</feature>
<feature type="topological domain" description="Cytoplasmic" evidence="2">
    <location>
        <begin position="223"/>
        <end position="244"/>
    </location>
</feature>
<feature type="transmembrane region" description="Helical; Name=6" evidence="2">
    <location>
        <begin position="245"/>
        <end position="272"/>
    </location>
</feature>
<feature type="topological domain" description="Extracellular" evidence="2">
    <location>
        <begin position="273"/>
        <end position="279"/>
    </location>
</feature>
<feature type="transmembrane region" description="Helical; Name=7" evidence="2">
    <location>
        <begin position="280"/>
        <end position="301"/>
    </location>
</feature>
<feature type="topological domain" description="Cytoplasmic" evidence="2">
    <location>
        <begin position="302"/>
        <end position="334"/>
    </location>
</feature>
<feature type="modified residue" description="N6-(retinylidene)lysine">
    <location>
        <position position="288"/>
    </location>
</feature>
<feature type="glycosylation site" description="N-linked (GlcNAc...) asparagine" evidence="2">
    <location>
        <position position="10"/>
    </location>
</feature>
<feature type="disulfide bond" evidence="3">
    <location>
        <begin position="103"/>
        <end position="179"/>
    </location>
</feature>
<evidence type="ECO:0000250" key="1"/>
<evidence type="ECO:0000255" key="2"/>
<evidence type="ECO:0000255" key="3">
    <source>
        <dbReference type="PROSITE-ProRule" id="PRU00521"/>
    </source>
</evidence>
<sequence length="334" mass="37394">MGKYFYLYENISKVGPYDGPQYYLAPTWAFYLQAAFMGFVFFVGTPLNFVVLLATAKYKKLRVPLNYILVNITFAGFIFVTFSVSQVFLASVRGYYFFGQTLCALEAAVGAVAGLVTSWSLAVLSFERYLVICKPFGAFKFGSNHALAAVIFTWFMGVVRCPPFFGWSRYIPEGLGCSCGPDWYTNCEEFSCASYSKFLLVTCFICPITIIIFSYSQLLGALRAVAAQQAESASTQKAEKEVSRMIIVMVASFVTCYGPYALTAQYYAYSQDENKDYRLVTIPAFFSKSSCVYNPLIYAFMNKQFNGCIMEMVFGKKMEEASEVSSKTEVSTDS</sequence>
<organism>
    <name type="scientific">Oryzias latipes</name>
    <name type="common">Japanese rice fish</name>
    <name type="synonym">Japanese killifish</name>
    <dbReference type="NCBI Taxonomy" id="8090"/>
    <lineage>
        <taxon>Eukaryota</taxon>
        <taxon>Metazoa</taxon>
        <taxon>Chordata</taxon>
        <taxon>Craniata</taxon>
        <taxon>Vertebrata</taxon>
        <taxon>Euteleostomi</taxon>
        <taxon>Actinopterygii</taxon>
        <taxon>Neopterygii</taxon>
        <taxon>Teleostei</taxon>
        <taxon>Neoteleostei</taxon>
        <taxon>Acanthomorphata</taxon>
        <taxon>Ovalentaria</taxon>
        <taxon>Atherinomorphae</taxon>
        <taxon>Beloniformes</taxon>
        <taxon>Adrianichthyidae</taxon>
        <taxon>Oryziinae</taxon>
        <taxon>Oryzias</taxon>
    </lineage>
</organism>
<keyword id="KW-0157">Chromophore</keyword>
<keyword id="KW-1015">Disulfide bond</keyword>
<keyword id="KW-0297">G-protein coupled receptor</keyword>
<keyword id="KW-0325">Glycoprotein</keyword>
<keyword id="KW-0472">Membrane</keyword>
<keyword id="KW-0597">Phosphoprotein</keyword>
<keyword id="KW-0600">Photoreceptor protein</keyword>
<keyword id="KW-0675">Receptor</keyword>
<keyword id="KW-1185">Reference proteome</keyword>
<keyword id="KW-0681">Retinal protein</keyword>
<keyword id="KW-0716">Sensory transduction</keyword>
<keyword id="KW-0807">Transducer</keyword>
<keyword id="KW-0812">Transmembrane</keyword>
<keyword id="KW-1133">Transmembrane helix</keyword>
<keyword id="KW-0844">Vision</keyword>
<name>OPSV_ORYLA</name>
<dbReference type="EMBL" id="AB001605">
    <property type="protein sequence ID" value="BAA19422.1"/>
    <property type="molecule type" value="mRNA"/>
</dbReference>
<dbReference type="RefSeq" id="NP_001098126.1">
    <property type="nucleotide sequence ID" value="NM_001104656.1"/>
</dbReference>
<dbReference type="SMR" id="P87368"/>
<dbReference type="FunCoup" id="P87368">
    <property type="interactions" value="34"/>
</dbReference>
<dbReference type="STRING" id="8090.ENSORLP00000024036"/>
<dbReference type="GeneID" id="100049181"/>
<dbReference type="KEGG" id="ola:100049181"/>
<dbReference type="CTD" id="30582"/>
<dbReference type="eggNOG" id="KOG3656">
    <property type="taxonomic scope" value="Eukaryota"/>
</dbReference>
<dbReference type="InParanoid" id="P87368"/>
<dbReference type="OrthoDB" id="6142583at2759"/>
<dbReference type="Proteomes" id="UP000001038">
    <property type="component" value="Unplaced"/>
</dbReference>
<dbReference type="Proteomes" id="UP000265180">
    <property type="component" value="Chromosome 9"/>
</dbReference>
<dbReference type="Proteomes" id="UP000265200">
    <property type="component" value="Chromosome 9"/>
</dbReference>
<dbReference type="GO" id="GO:0001750">
    <property type="term" value="C:photoreceptor outer segment"/>
    <property type="evidence" value="ECO:0000318"/>
    <property type="project" value="GO_Central"/>
</dbReference>
<dbReference type="GO" id="GO:0005886">
    <property type="term" value="C:plasma membrane"/>
    <property type="evidence" value="ECO:0000318"/>
    <property type="project" value="GO_Central"/>
</dbReference>
<dbReference type="GO" id="GO:0008020">
    <property type="term" value="F:G protein-coupled photoreceptor activity"/>
    <property type="evidence" value="ECO:0000318"/>
    <property type="project" value="GO_Central"/>
</dbReference>
<dbReference type="GO" id="GO:0071482">
    <property type="term" value="P:cellular response to light stimulus"/>
    <property type="evidence" value="ECO:0000318"/>
    <property type="project" value="GO_Central"/>
</dbReference>
<dbReference type="GO" id="GO:0007186">
    <property type="term" value="P:G protein-coupled receptor signaling pathway"/>
    <property type="evidence" value="ECO:0000318"/>
    <property type="project" value="GO_Central"/>
</dbReference>
<dbReference type="GO" id="GO:0007602">
    <property type="term" value="P:phototransduction"/>
    <property type="evidence" value="ECO:0000318"/>
    <property type="project" value="GO_Central"/>
</dbReference>
<dbReference type="GO" id="GO:0007601">
    <property type="term" value="P:visual perception"/>
    <property type="evidence" value="ECO:0007669"/>
    <property type="project" value="UniProtKB-KW"/>
</dbReference>
<dbReference type="FunFam" id="1.20.1070.10:FF:000018">
    <property type="entry name" value="Rhodopsin"/>
    <property type="match status" value="1"/>
</dbReference>
<dbReference type="Gene3D" id="1.20.1070.10">
    <property type="entry name" value="Rhodopsin 7-helix transmembrane proteins"/>
    <property type="match status" value="1"/>
</dbReference>
<dbReference type="InterPro" id="IPR050125">
    <property type="entry name" value="GPCR_opsins"/>
</dbReference>
<dbReference type="InterPro" id="IPR000276">
    <property type="entry name" value="GPCR_Rhodpsn"/>
</dbReference>
<dbReference type="InterPro" id="IPR017452">
    <property type="entry name" value="GPCR_Rhodpsn_7TM"/>
</dbReference>
<dbReference type="InterPro" id="IPR001760">
    <property type="entry name" value="Opsin"/>
</dbReference>
<dbReference type="InterPro" id="IPR001521">
    <property type="entry name" value="Opsin_blue"/>
</dbReference>
<dbReference type="InterPro" id="IPR027430">
    <property type="entry name" value="Retinal_BS"/>
</dbReference>
<dbReference type="PANTHER" id="PTHR24240">
    <property type="entry name" value="OPSIN"/>
    <property type="match status" value="1"/>
</dbReference>
<dbReference type="Pfam" id="PF00001">
    <property type="entry name" value="7tm_1"/>
    <property type="match status" value="1"/>
</dbReference>
<dbReference type="PRINTS" id="PR00237">
    <property type="entry name" value="GPCRRHODOPSN"/>
</dbReference>
<dbReference type="PRINTS" id="PR00238">
    <property type="entry name" value="OPSIN"/>
</dbReference>
<dbReference type="PRINTS" id="PR00574">
    <property type="entry name" value="OPSINBLUE"/>
</dbReference>
<dbReference type="SUPFAM" id="SSF81321">
    <property type="entry name" value="Family A G protein-coupled receptor-like"/>
    <property type="match status" value="1"/>
</dbReference>
<dbReference type="PROSITE" id="PS00237">
    <property type="entry name" value="G_PROTEIN_RECEP_F1_1"/>
    <property type="match status" value="1"/>
</dbReference>
<dbReference type="PROSITE" id="PS50262">
    <property type="entry name" value="G_PROTEIN_RECEP_F1_2"/>
    <property type="match status" value="1"/>
</dbReference>
<dbReference type="PROSITE" id="PS00238">
    <property type="entry name" value="OPSIN"/>
    <property type="match status" value="1"/>
</dbReference>